<sequence>MTQVAKKILVTCALPYANGSIHLGHMLEHIQADVWVRYQRMRGHEVNFICADDAHGTPIMLKAQQLGITPEQMIGEMSQEHQTDFAGFNISYDNYHSTHSDENRELSELIYTRLKENGFIKNRTISQLYDPEKGMFLPDRFVKGTCPKCKSADQYGDNCEVCGATYSPTELIEPKSVVSGATPVMRDSEHFFFDLPSFSEMLQAWTRSGALQEQVANKMQEWFESGLQQWDISRDAPYFGFEIPNAPGKYFYVWLDAPIGYMGSFKNLCDKRGDTTSFDEYWKKDSDAELYHFIGKDIVYFHSLFWPAMLEGSHFRKPTNLFVHGYVTVNGAKMSKSRGTFIKASTWLKHFDADSLRYYYTAKLSSRIDDIDLNLEDFVQRVNADIVNKVVNLASRNAGFINKRFDGVLAAELADPQLYKTFTDAAAVIGEAWESREFGKAIREIMALADVANRYVDEQAPWVVAKQEGRDADLQAICSMGINLFRVLMTYLKPVLPTLSERVEAFLNSELNWDAIEQPLLSHKVNTFKALYNRIDMKQVEALVEASKEEVKAAAAPVTGPLADFPIQETITFDDFAKIDLRVALIENAEFVEGSDKLLRLTLDLGGEKRNVFSGIRSAYPDPQALIGRQTVMVANLAPRKMRFGVSEGMVMAAGPGGKDIFLLSPDDGAKPGQQVK</sequence>
<evidence type="ECO:0000255" key="1">
    <source>
        <dbReference type="HAMAP-Rule" id="MF_00098"/>
    </source>
</evidence>
<evidence type="ECO:0000305" key="2"/>
<keyword id="KW-0030">Aminoacyl-tRNA synthetase</keyword>
<keyword id="KW-0067">ATP-binding</keyword>
<keyword id="KW-0963">Cytoplasm</keyword>
<keyword id="KW-0436">Ligase</keyword>
<keyword id="KW-0479">Metal-binding</keyword>
<keyword id="KW-0547">Nucleotide-binding</keyword>
<keyword id="KW-0648">Protein biosynthesis</keyword>
<keyword id="KW-0694">RNA-binding</keyword>
<keyword id="KW-0820">tRNA-binding</keyword>
<keyword id="KW-0862">Zinc</keyword>
<protein>
    <recommendedName>
        <fullName evidence="1">Methionine--tRNA ligase</fullName>
        <ecNumber evidence="1">6.1.1.10</ecNumber>
    </recommendedName>
    <alternativeName>
        <fullName evidence="1">Methionyl-tRNA synthetase</fullName>
        <shortName evidence="1">MetRS</shortName>
    </alternativeName>
</protein>
<organism>
    <name type="scientific">Salmonella choleraesuis (strain SC-B67)</name>
    <dbReference type="NCBI Taxonomy" id="321314"/>
    <lineage>
        <taxon>Bacteria</taxon>
        <taxon>Pseudomonadati</taxon>
        <taxon>Pseudomonadota</taxon>
        <taxon>Gammaproteobacteria</taxon>
        <taxon>Enterobacterales</taxon>
        <taxon>Enterobacteriaceae</taxon>
        <taxon>Salmonella</taxon>
    </lineage>
</organism>
<gene>
    <name evidence="1" type="primary">metG</name>
    <name type="ordered locus">SCH_2170</name>
</gene>
<accession>Q57MI5</accession>
<name>SYM_SALCH</name>
<comment type="function">
    <text evidence="1">Is required not only for elongation of protein synthesis but also for the initiation of all mRNA translation through initiator tRNA(fMet) aminoacylation.</text>
</comment>
<comment type="catalytic activity">
    <reaction evidence="1">
        <text>tRNA(Met) + L-methionine + ATP = L-methionyl-tRNA(Met) + AMP + diphosphate</text>
        <dbReference type="Rhea" id="RHEA:13481"/>
        <dbReference type="Rhea" id="RHEA-COMP:9667"/>
        <dbReference type="Rhea" id="RHEA-COMP:9698"/>
        <dbReference type="ChEBI" id="CHEBI:30616"/>
        <dbReference type="ChEBI" id="CHEBI:33019"/>
        <dbReference type="ChEBI" id="CHEBI:57844"/>
        <dbReference type="ChEBI" id="CHEBI:78442"/>
        <dbReference type="ChEBI" id="CHEBI:78530"/>
        <dbReference type="ChEBI" id="CHEBI:456215"/>
        <dbReference type="EC" id="6.1.1.10"/>
    </reaction>
</comment>
<comment type="cofactor">
    <cofactor evidence="1">
        <name>Zn(2+)</name>
        <dbReference type="ChEBI" id="CHEBI:29105"/>
    </cofactor>
    <text evidence="1">Binds 1 zinc ion per subunit.</text>
</comment>
<comment type="subunit">
    <text evidence="1">Homodimer.</text>
</comment>
<comment type="subcellular location">
    <subcellularLocation>
        <location evidence="1">Cytoplasm</location>
    </subcellularLocation>
</comment>
<comment type="similarity">
    <text evidence="1">Belongs to the class-I aminoacyl-tRNA synthetase family. MetG type 1 subfamily.</text>
</comment>
<comment type="sequence caution" evidence="2">
    <conflict type="erroneous initiation">
        <sequence resource="EMBL-CDS" id="AAX66076"/>
    </conflict>
</comment>
<feature type="chain" id="PRO_0000139159" description="Methionine--tRNA ligase">
    <location>
        <begin position="1"/>
        <end position="677"/>
    </location>
</feature>
<feature type="domain" description="tRNA-binding" evidence="1">
    <location>
        <begin position="575"/>
        <end position="677"/>
    </location>
</feature>
<feature type="short sequence motif" description="'HIGH' region">
    <location>
        <begin position="15"/>
        <end position="25"/>
    </location>
</feature>
<feature type="short sequence motif" description="'KMSKS' region">
    <location>
        <begin position="333"/>
        <end position="337"/>
    </location>
</feature>
<feature type="binding site" evidence="1">
    <location>
        <position position="146"/>
    </location>
    <ligand>
        <name>Zn(2+)</name>
        <dbReference type="ChEBI" id="CHEBI:29105"/>
    </ligand>
</feature>
<feature type="binding site" evidence="1">
    <location>
        <position position="149"/>
    </location>
    <ligand>
        <name>Zn(2+)</name>
        <dbReference type="ChEBI" id="CHEBI:29105"/>
    </ligand>
</feature>
<feature type="binding site" evidence="1">
    <location>
        <position position="159"/>
    </location>
    <ligand>
        <name>Zn(2+)</name>
        <dbReference type="ChEBI" id="CHEBI:29105"/>
    </ligand>
</feature>
<feature type="binding site" evidence="1">
    <location>
        <position position="162"/>
    </location>
    <ligand>
        <name>Zn(2+)</name>
        <dbReference type="ChEBI" id="CHEBI:29105"/>
    </ligand>
</feature>
<feature type="binding site" evidence="1">
    <location>
        <position position="336"/>
    </location>
    <ligand>
        <name>ATP</name>
        <dbReference type="ChEBI" id="CHEBI:30616"/>
    </ligand>
</feature>
<dbReference type="EC" id="6.1.1.10" evidence="1"/>
<dbReference type="EMBL" id="AE017220">
    <property type="protein sequence ID" value="AAX66076.1"/>
    <property type="status" value="ALT_INIT"/>
    <property type="molecule type" value="Genomic_DNA"/>
</dbReference>
<dbReference type="RefSeq" id="WP_000195340.1">
    <property type="nucleotide sequence ID" value="NC_006905.1"/>
</dbReference>
<dbReference type="SMR" id="Q57MI5"/>
<dbReference type="KEGG" id="sec:SCH_2170"/>
<dbReference type="HOGENOM" id="CLU_009710_7_0_6"/>
<dbReference type="Proteomes" id="UP000000538">
    <property type="component" value="Chromosome"/>
</dbReference>
<dbReference type="GO" id="GO:0005829">
    <property type="term" value="C:cytosol"/>
    <property type="evidence" value="ECO:0007669"/>
    <property type="project" value="TreeGrafter"/>
</dbReference>
<dbReference type="GO" id="GO:0005524">
    <property type="term" value="F:ATP binding"/>
    <property type="evidence" value="ECO:0007669"/>
    <property type="project" value="UniProtKB-UniRule"/>
</dbReference>
<dbReference type="GO" id="GO:0046872">
    <property type="term" value="F:metal ion binding"/>
    <property type="evidence" value="ECO:0007669"/>
    <property type="project" value="UniProtKB-KW"/>
</dbReference>
<dbReference type="GO" id="GO:0004825">
    <property type="term" value="F:methionine-tRNA ligase activity"/>
    <property type="evidence" value="ECO:0007669"/>
    <property type="project" value="UniProtKB-UniRule"/>
</dbReference>
<dbReference type="GO" id="GO:0000049">
    <property type="term" value="F:tRNA binding"/>
    <property type="evidence" value="ECO:0007669"/>
    <property type="project" value="UniProtKB-KW"/>
</dbReference>
<dbReference type="GO" id="GO:0006431">
    <property type="term" value="P:methionyl-tRNA aminoacylation"/>
    <property type="evidence" value="ECO:0007669"/>
    <property type="project" value="UniProtKB-UniRule"/>
</dbReference>
<dbReference type="CDD" id="cd07957">
    <property type="entry name" value="Anticodon_Ia_Met"/>
    <property type="match status" value="1"/>
</dbReference>
<dbReference type="CDD" id="cd00814">
    <property type="entry name" value="MetRS_core"/>
    <property type="match status" value="1"/>
</dbReference>
<dbReference type="CDD" id="cd02800">
    <property type="entry name" value="tRNA_bind_EcMetRS_like"/>
    <property type="match status" value="1"/>
</dbReference>
<dbReference type="FunFam" id="1.10.730.10:FF:000005">
    <property type="entry name" value="Methionine--tRNA ligase"/>
    <property type="match status" value="1"/>
</dbReference>
<dbReference type="FunFam" id="2.20.28.20:FF:000001">
    <property type="entry name" value="Methionine--tRNA ligase"/>
    <property type="match status" value="1"/>
</dbReference>
<dbReference type="FunFam" id="2.40.50.140:FF:000042">
    <property type="entry name" value="Methionine--tRNA ligase"/>
    <property type="match status" value="1"/>
</dbReference>
<dbReference type="Gene3D" id="3.40.50.620">
    <property type="entry name" value="HUPs"/>
    <property type="match status" value="1"/>
</dbReference>
<dbReference type="Gene3D" id="1.10.730.10">
    <property type="entry name" value="Isoleucyl-tRNA Synthetase, Domain 1"/>
    <property type="match status" value="1"/>
</dbReference>
<dbReference type="Gene3D" id="2.20.28.20">
    <property type="entry name" value="Methionyl-tRNA synthetase, Zn-domain"/>
    <property type="match status" value="1"/>
</dbReference>
<dbReference type="Gene3D" id="2.40.50.140">
    <property type="entry name" value="Nucleic acid-binding proteins"/>
    <property type="match status" value="1"/>
</dbReference>
<dbReference type="HAMAP" id="MF_00098">
    <property type="entry name" value="Met_tRNA_synth_type1"/>
    <property type="match status" value="1"/>
</dbReference>
<dbReference type="InterPro" id="IPR001412">
    <property type="entry name" value="aa-tRNA-synth_I_CS"/>
</dbReference>
<dbReference type="InterPro" id="IPR041872">
    <property type="entry name" value="Anticodon_Met"/>
</dbReference>
<dbReference type="InterPro" id="IPR004495">
    <property type="entry name" value="Met-tRNA-synth_bsu_C"/>
</dbReference>
<dbReference type="InterPro" id="IPR023458">
    <property type="entry name" value="Met-tRNA_ligase_1"/>
</dbReference>
<dbReference type="InterPro" id="IPR014758">
    <property type="entry name" value="Met-tRNA_synth"/>
</dbReference>
<dbReference type="InterPro" id="IPR015413">
    <property type="entry name" value="Methionyl/Leucyl_tRNA_Synth"/>
</dbReference>
<dbReference type="InterPro" id="IPR033911">
    <property type="entry name" value="MetRS_core"/>
</dbReference>
<dbReference type="InterPro" id="IPR029038">
    <property type="entry name" value="MetRS_Zn"/>
</dbReference>
<dbReference type="InterPro" id="IPR012340">
    <property type="entry name" value="NA-bd_OB-fold"/>
</dbReference>
<dbReference type="InterPro" id="IPR014729">
    <property type="entry name" value="Rossmann-like_a/b/a_fold"/>
</dbReference>
<dbReference type="InterPro" id="IPR002547">
    <property type="entry name" value="tRNA-bd_dom"/>
</dbReference>
<dbReference type="InterPro" id="IPR009080">
    <property type="entry name" value="tRNAsynth_Ia_anticodon-bd"/>
</dbReference>
<dbReference type="NCBIfam" id="TIGR00398">
    <property type="entry name" value="metG"/>
    <property type="match status" value="1"/>
</dbReference>
<dbReference type="NCBIfam" id="TIGR00399">
    <property type="entry name" value="metG_C_term"/>
    <property type="match status" value="1"/>
</dbReference>
<dbReference type="NCBIfam" id="NF001100">
    <property type="entry name" value="PRK00133.1"/>
    <property type="match status" value="1"/>
</dbReference>
<dbReference type="PANTHER" id="PTHR45765">
    <property type="entry name" value="METHIONINE--TRNA LIGASE"/>
    <property type="match status" value="1"/>
</dbReference>
<dbReference type="PANTHER" id="PTHR45765:SF1">
    <property type="entry name" value="METHIONINE--TRNA LIGASE, CYTOPLASMIC"/>
    <property type="match status" value="1"/>
</dbReference>
<dbReference type="Pfam" id="PF19303">
    <property type="entry name" value="Anticodon_3"/>
    <property type="match status" value="1"/>
</dbReference>
<dbReference type="Pfam" id="PF09334">
    <property type="entry name" value="tRNA-synt_1g"/>
    <property type="match status" value="1"/>
</dbReference>
<dbReference type="Pfam" id="PF01588">
    <property type="entry name" value="tRNA_bind"/>
    <property type="match status" value="1"/>
</dbReference>
<dbReference type="PRINTS" id="PR01041">
    <property type="entry name" value="TRNASYNTHMET"/>
</dbReference>
<dbReference type="SUPFAM" id="SSF47323">
    <property type="entry name" value="Anticodon-binding domain of a subclass of class I aminoacyl-tRNA synthetases"/>
    <property type="match status" value="1"/>
</dbReference>
<dbReference type="SUPFAM" id="SSF57770">
    <property type="entry name" value="Methionyl-tRNA synthetase (MetRS), Zn-domain"/>
    <property type="match status" value="1"/>
</dbReference>
<dbReference type="SUPFAM" id="SSF50249">
    <property type="entry name" value="Nucleic acid-binding proteins"/>
    <property type="match status" value="1"/>
</dbReference>
<dbReference type="SUPFAM" id="SSF52374">
    <property type="entry name" value="Nucleotidylyl transferase"/>
    <property type="match status" value="1"/>
</dbReference>
<dbReference type="PROSITE" id="PS00178">
    <property type="entry name" value="AA_TRNA_LIGASE_I"/>
    <property type="match status" value="1"/>
</dbReference>
<dbReference type="PROSITE" id="PS50886">
    <property type="entry name" value="TRBD"/>
    <property type="match status" value="1"/>
</dbReference>
<reference key="1">
    <citation type="journal article" date="2005" name="Nucleic Acids Res.">
        <title>The genome sequence of Salmonella enterica serovar Choleraesuis, a highly invasive and resistant zoonotic pathogen.</title>
        <authorList>
            <person name="Chiu C.-H."/>
            <person name="Tang P."/>
            <person name="Chu C."/>
            <person name="Hu S."/>
            <person name="Bao Q."/>
            <person name="Yu J."/>
            <person name="Chou Y.-Y."/>
            <person name="Wang H.-S."/>
            <person name="Lee Y.-S."/>
        </authorList>
    </citation>
    <scope>NUCLEOTIDE SEQUENCE [LARGE SCALE GENOMIC DNA]</scope>
    <source>
        <strain>SC-B67</strain>
    </source>
</reference>
<proteinExistence type="inferred from homology"/>